<sequence>MSKVYDWFEERLEIQAIADDITSKYVPPHVNIFYCLGGITLTCFLVQVATGFAMTFYYRPTVTDAFASVQYIMTEANFGWLIRSVHRWSASMMVLMMILHVFRVYLTGGFKKPRELTWVTGVVLAVLTASFGVTGYSLPRDQIGYWAVKIVTGVPEAIPVIGSPLVELLRGSASVGQSTLTRFYSLHTFVLPLLTAVFMLMHFPMIRKQGISGPL</sequence>
<organism>
    <name type="scientific">Daucus carota</name>
    <name type="common">Wild carrot</name>
    <dbReference type="NCBI Taxonomy" id="4039"/>
    <lineage>
        <taxon>Eukaryota</taxon>
        <taxon>Viridiplantae</taxon>
        <taxon>Streptophyta</taxon>
        <taxon>Embryophyta</taxon>
        <taxon>Tracheophyta</taxon>
        <taxon>Spermatophyta</taxon>
        <taxon>Magnoliopsida</taxon>
        <taxon>eudicotyledons</taxon>
        <taxon>Gunneridae</taxon>
        <taxon>Pentapetalae</taxon>
        <taxon>asterids</taxon>
        <taxon>campanulids</taxon>
        <taxon>Apiales</taxon>
        <taxon>Apiaceae</taxon>
        <taxon>Apioideae</taxon>
        <taxon>Scandiceae</taxon>
        <taxon>Daucinae</taxon>
        <taxon>Daucus</taxon>
        <taxon>Daucus sect. Daucus</taxon>
    </lineage>
</organism>
<gene>
    <name evidence="1" type="primary">petB</name>
</gene>
<proteinExistence type="inferred from homology"/>
<evidence type="ECO:0000255" key="1">
    <source>
        <dbReference type="HAMAP-Rule" id="MF_00633"/>
    </source>
</evidence>
<keyword id="KW-0150">Chloroplast</keyword>
<keyword id="KW-0249">Electron transport</keyword>
<keyword id="KW-0349">Heme</keyword>
<keyword id="KW-0408">Iron</keyword>
<keyword id="KW-0472">Membrane</keyword>
<keyword id="KW-0479">Metal-binding</keyword>
<keyword id="KW-0602">Photosynthesis</keyword>
<keyword id="KW-0934">Plastid</keyword>
<keyword id="KW-0793">Thylakoid</keyword>
<keyword id="KW-0812">Transmembrane</keyword>
<keyword id="KW-1133">Transmembrane helix</keyword>
<keyword id="KW-0813">Transport</keyword>
<feature type="chain" id="PRO_0000275313" description="Cytochrome b6">
    <location>
        <begin position="1"/>
        <end position="215"/>
    </location>
</feature>
<feature type="transmembrane region" description="Helical" evidence="1">
    <location>
        <begin position="32"/>
        <end position="52"/>
    </location>
</feature>
<feature type="transmembrane region" description="Helical" evidence="1">
    <location>
        <begin position="90"/>
        <end position="110"/>
    </location>
</feature>
<feature type="transmembrane region" description="Helical" evidence="1">
    <location>
        <begin position="116"/>
        <end position="136"/>
    </location>
</feature>
<feature type="transmembrane region" description="Helical" evidence="1">
    <location>
        <begin position="186"/>
        <end position="206"/>
    </location>
</feature>
<feature type="binding site" description="covalent" evidence="1">
    <location>
        <position position="35"/>
    </location>
    <ligand>
        <name>heme c</name>
        <dbReference type="ChEBI" id="CHEBI:61717"/>
    </ligand>
</feature>
<feature type="binding site" description="axial binding residue" evidence="1">
    <location>
        <position position="86"/>
    </location>
    <ligand>
        <name>heme b</name>
        <dbReference type="ChEBI" id="CHEBI:60344"/>
        <label>2</label>
    </ligand>
    <ligandPart>
        <name>Fe</name>
        <dbReference type="ChEBI" id="CHEBI:18248"/>
    </ligandPart>
</feature>
<feature type="binding site" description="axial binding residue" evidence="1">
    <location>
        <position position="100"/>
    </location>
    <ligand>
        <name>heme b</name>
        <dbReference type="ChEBI" id="CHEBI:60344"/>
        <label>1</label>
    </ligand>
    <ligandPart>
        <name>Fe</name>
        <dbReference type="ChEBI" id="CHEBI:18248"/>
    </ligandPart>
</feature>
<feature type="binding site" description="axial binding residue" evidence="1">
    <location>
        <position position="187"/>
    </location>
    <ligand>
        <name>heme b</name>
        <dbReference type="ChEBI" id="CHEBI:60344"/>
        <label>2</label>
    </ligand>
    <ligandPart>
        <name>Fe</name>
        <dbReference type="ChEBI" id="CHEBI:18248"/>
    </ligandPart>
</feature>
<feature type="binding site" description="axial binding residue" evidence="1">
    <location>
        <position position="202"/>
    </location>
    <ligand>
        <name>heme b</name>
        <dbReference type="ChEBI" id="CHEBI:60344"/>
        <label>1</label>
    </ligand>
    <ligandPart>
        <name>Fe</name>
        <dbReference type="ChEBI" id="CHEBI:18248"/>
    </ligandPart>
</feature>
<geneLocation type="chloroplast"/>
<accession>Q0G9T2</accession>
<protein>
    <recommendedName>
        <fullName evidence="1">Cytochrome b6</fullName>
    </recommendedName>
</protein>
<dbReference type="EMBL" id="DQ898156">
    <property type="protein sequence ID" value="ABI32453.1"/>
    <property type="molecule type" value="Genomic_DNA"/>
</dbReference>
<dbReference type="RefSeq" id="YP_740147.1">
    <property type="nucleotide sequence ID" value="NC_008325.1"/>
</dbReference>
<dbReference type="SMR" id="Q0G9T2"/>
<dbReference type="GeneID" id="4266774"/>
<dbReference type="OMA" id="WDQLAIW"/>
<dbReference type="GO" id="GO:0009535">
    <property type="term" value="C:chloroplast thylakoid membrane"/>
    <property type="evidence" value="ECO:0007669"/>
    <property type="project" value="UniProtKB-SubCell"/>
</dbReference>
<dbReference type="GO" id="GO:0045158">
    <property type="term" value="F:electron transporter, transferring electrons within cytochrome b6/f complex of photosystem II activity"/>
    <property type="evidence" value="ECO:0007669"/>
    <property type="project" value="UniProtKB-UniRule"/>
</dbReference>
<dbReference type="GO" id="GO:0046872">
    <property type="term" value="F:metal ion binding"/>
    <property type="evidence" value="ECO:0007669"/>
    <property type="project" value="UniProtKB-KW"/>
</dbReference>
<dbReference type="GO" id="GO:0016491">
    <property type="term" value="F:oxidoreductase activity"/>
    <property type="evidence" value="ECO:0007669"/>
    <property type="project" value="InterPro"/>
</dbReference>
<dbReference type="GO" id="GO:0015979">
    <property type="term" value="P:photosynthesis"/>
    <property type="evidence" value="ECO:0007669"/>
    <property type="project" value="UniProtKB-UniRule"/>
</dbReference>
<dbReference type="GO" id="GO:0022904">
    <property type="term" value="P:respiratory electron transport chain"/>
    <property type="evidence" value="ECO:0007669"/>
    <property type="project" value="InterPro"/>
</dbReference>
<dbReference type="CDD" id="cd00284">
    <property type="entry name" value="Cytochrome_b_N"/>
    <property type="match status" value="1"/>
</dbReference>
<dbReference type="FunFam" id="1.20.810.10:FF:000001">
    <property type="entry name" value="Cytochrome b6"/>
    <property type="match status" value="1"/>
</dbReference>
<dbReference type="Gene3D" id="1.20.810.10">
    <property type="entry name" value="Cytochrome Bc1 Complex, Chain C"/>
    <property type="match status" value="1"/>
</dbReference>
<dbReference type="HAMAP" id="MF_00633">
    <property type="entry name" value="Cytb6_f_cytb6"/>
    <property type="match status" value="1"/>
</dbReference>
<dbReference type="InterPro" id="IPR005797">
    <property type="entry name" value="Cyt_b/b6_N"/>
</dbReference>
<dbReference type="InterPro" id="IPR023530">
    <property type="entry name" value="Cyt_B6_PetB"/>
</dbReference>
<dbReference type="InterPro" id="IPR027387">
    <property type="entry name" value="Cytb/b6-like_sf"/>
</dbReference>
<dbReference type="InterPro" id="IPR048259">
    <property type="entry name" value="Cytochrome_b_N_euk/bac"/>
</dbReference>
<dbReference type="InterPro" id="IPR016174">
    <property type="entry name" value="Di-haem_cyt_TM"/>
</dbReference>
<dbReference type="NCBIfam" id="NF002990">
    <property type="entry name" value="PRK03735.1"/>
    <property type="match status" value="1"/>
</dbReference>
<dbReference type="PANTHER" id="PTHR19271">
    <property type="entry name" value="CYTOCHROME B"/>
    <property type="match status" value="1"/>
</dbReference>
<dbReference type="PANTHER" id="PTHR19271:SF16">
    <property type="entry name" value="CYTOCHROME B"/>
    <property type="match status" value="1"/>
</dbReference>
<dbReference type="Pfam" id="PF00033">
    <property type="entry name" value="Cytochrome_B"/>
    <property type="match status" value="1"/>
</dbReference>
<dbReference type="PIRSF" id="PIRSF000032">
    <property type="entry name" value="Cytochrome_b6"/>
    <property type="match status" value="1"/>
</dbReference>
<dbReference type="SUPFAM" id="SSF81342">
    <property type="entry name" value="Transmembrane di-heme cytochromes"/>
    <property type="match status" value="1"/>
</dbReference>
<dbReference type="PROSITE" id="PS51002">
    <property type="entry name" value="CYTB_NTER"/>
    <property type="match status" value="1"/>
</dbReference>
<name>CYB6_DAUCA</name>
<reference key="1">
    <citation type="journal article" date="2006" name="BMC Genomics">
        <title>Complete plastid genome sequence of Daucus carota: implications for biotechnology and phylogeny of angiosperms.</title>
        <authorList>
            <person name="Ruhlman T."/>
            <person name="Lee S.-B."/>
            <person name="Jansen R.K."/>
            <person name="Hostetler J.B."/>
            <person name="Tallon L.J."/>
            <person name="Town C.D."/>
            <person name="Daniell H."/>
        </authorList>
    </citation>
    <scope>NUCLEOTIDE SEQUENCE [LARGE SCALE GENOMIC DNA]</scope>
    <source>
        <strain>cv. Danvers Half-long</strain>
    </source>
</reference>
<comment type="function">
    <text evidence="1">Component of the cytochrome b6-f complex, which mediates electron transfer between photosystem II (PSII) and photosystem I (PSI), cyclic electron flow around PSI, and state transitions.</text>
</comment>
<comment type="cofactor">
    <cofactor evidence="1">
        <name>heme b</name>
        <dbReference type="ChEBI" id="CHEBI:60344"/>
    </cofactor>
    <text evidence="1">Binds 2 heme b groups non-covalently with two histidine residues as axial ligands.</text>
</comment>
<comment type="cofactor">
    <cofactor evidence="1">
        <name>heme c</name>
        <dbReference type="ChEBI" id="CHEBI:61717"/>
    </cofactor>
    <text evidence="1">Binds one heme group covalently by a single cysteine link with no axial amino acid ligand. This heme was named heme ci.</text>
</comment>
<comment type="subunit">
    <text evidence="1">The 4 large subunits of the cytochrome b6-f complex are cytochrome b6, subunit IV (17 kDa polypeptide, PetD), cytochrome f and the Rieske protein, while the 4 small subunits are PetG, PetL, PetM and PetN. The complex functions as a dimer.</text>
</comment>
<comment type="subcellular location">
    <subcellularLocation>
        <location evidence="1">Plastid</location>
        <location evidence="1">Chloroplast thylakoid membrane</location>
        <topology evidence="1">Multi-pass membrane protein</topology>
    </subcellularLocation>
</comment>
<comment type="miscellaneous">
    <text evidence="1">Heme 1 (or BH or b566) is high-potential and absorbs at about 566 nm, and heme 2 (or BL or b562) is low-potential and absorbs at about 562 nm.</text>
</comment>
<comment type="similarity">
    <text evidence="1">Belongs to the cytochrome b family. PetB subfamily.</text>
</comment>